<accession>P62555</accession>
<accession>P05703</accession>
<geneLocation type="plasmid">
    <name>pO157</name>
</geneLocation>
<organism>
    <name type="scientific">Escherichia coli O157:H7</name>
    <dbReference type="NCBI Taxonomy" id="83334"/>
    <lineage>
        <taxon>Bacteria</taxon>
        <taxon>Pseudomonadati</taxon>
        <taxon>Pseudomonadota</taxon>
        <taxon>Gammaproteobacteria</taxon>
        <taxon>Enterobacterales</taxon>
        <taxon>Enterobacteriaceae</taxon>
        <taxon>Escherichia</taxon>
    </lineage>
</organism>
<name>CCDB_ECO57</name>
<sequence>MQFKVYTYKRESRYRLFVDVQSDIIDTPGRRMVIPLASARLLSDKVSRELYPVVHIGDESWRMMTTDMASVPVSVIGEEVADLSHRENDIKNAINLMFWGI</sequence>
<protein>
    <recommendedName>
        <fullName>Toxin CcdB</fullName>
    </recommendedName>
    <alternativeName>
        <fullName>Cytotoxic protein CcdB</fullName>
    </alternativeName>
    <alternativeName>
        <fullName>LynB</fullName>
    </alternativeName>
    <alternativeName>
        <fullName>Protein G</fullName>
    </alternativeName>
    <alternativeName>
        <fullName>Protein LetD</fullName>
    </alternativeName>
</protein>
<gene>
    <name type="primary">ccdB</name>
    <name type="synonym">G</name>
    <name type="synonym">letB</name>
    <name type="synonym">letD</name>
    <name type="ordered locus">L7063</name>
    <name type="ordered locus">ECO57PM28</name>
</gene>
<feature type="chain" id="PRO_0000068387" description="Toxin CcdB">
    <location>
        <begin position="1"/>
        <end position="101"/>
    </location>
</feature>
<reference key="1">
    <citation type="journal article" date="1998" name="Nucleic Acids Res.">
        <title>The complete DNA sequence and analysis of the large virulence plasmid of Escherichia coli O157:H7.</title>
        <authorList>
            <person name="Burland V."/>
            <person name="Shao Y."/>
            <person name="Perna N.T."/>
            <person name="Plunkett G. III"/>
            <person name="Sofia H.J."/>
            <person name="Blattner F.R."/>
        </authorList>
    </citation>
    <scope>NUCLEOTIDE SEQUENCE [LARGE SCALE GENOMIC DNA]</scope>
    <source>
        <strain>O157:H7 / EDL933 / ATCC 700927 / EHEC</strain>
    </source>
</reference>
<reference key="2">
    <citation type="journal article" date="1998" name="DNA Res.">
        <title>Complete nucleotide sequences of 93-kb and 3.3-kb plasmids of an enterohemorrhagic Escherichia coli O157:H7 derived from Sakai outbreak.</title>
        <authorList>
            <person name="Makino K."/>
            <person name="Ishii K."/>
            <person name="Yasunaga T."/>
            <person name="Hattori M."/>
            <person name="Yokoyama K."/>
            <person name="Yatsudo H.C."/>
            <person name="Kubota Y."/>
            <person name="Yamaichi Y."/>
            <person name="Iida T."/>
            <person name="Yamamoto K."/>
            <person name="Honda T."/>
            <person name="Han C.G."/>
            <person name="Ohtsubo A."/>
            <person name="Kasamatsu M."/>
            <person name="Hayashi T."/>
            <person name="Kuhara S."/>
            <person name="Shinagawa H."/>
        </authorList>
    </citation>
    <scope>NUCLEOTIDE SEQUENCE [LARGE SCALE GENOMIC DNA]</scope>
    <source>
        <strain>O157:H7 / Sakai / RIMD 0509952 / EHEC</strain>
    </source>
</reference>
<dbReference type="EMBL" id="AF074613">
    <property type="protein sequence ID" value="AAC70131.1"/>
    <property type="molecule type" value="Genomic_DNA"/>
</dbReference>
<dbReference type="EMBL" id="AB011549">
    <property type="protein sequence ID" value="BAA31785.1"/>
    <property type="molecule type" value="Genomic_DNA"/>
</dbReference>
<dbReference type="RefSeq" id="NP_052635.1">
    <property type="nucleotide sequence ID" value="NC_002128.1"/>
</dbReference>
<dbReference type="RefSeq" id="WP_001159868.1">
    <property type="nucleotide sequence ID" value="NZ_VOAI01000036.1"/>
</dbReference>
<dbReference type="SMR" id="P62555"/>
<dbReference type="GeneID" id="1789728"/>
<dbReference type="KEGG" id="ece:Z_L7063"/>
<dbReference type="KEGG" id="ecs:pO157p29"/>
<dbReference type="PATRIC" id="fig|386585.9.peg.32"/>
<dbReference type="eggNOG" id="ENOG5031N2R">
    <property type="taxonomic scope" value="Bacteria"/>
</dbReference>
<dbReference type="HOGENOM" id="CLU_158043_2_0_6"/>
<dbReference type="Proteomes" id="UP000000558">
    <property type="component" value="Plasmid pO157"/>
</dbReference>
<dbReference type="Proteomes" id="UP000002519">
    <property type="component" value="Plasmid pO157"/>
</dbReference>
<dbReference type="GO" id="GO:0008657">
    <property type="term" value="F:DNA topoisomerase type II (double strand cut, ATP-hydrolyzing) inhibitor activity"/>
    <property type="evidence" value="ECO:0007669"/>
    <property type="project" value="InterPro"/>
</dbReference>
<dbReference type="GO" id="GO:0006276">
    <property type="term" value="P:plasmid maintenance"/>
    <property type="evidence" value="ECO:0007669"/>
    <property type="project" value="InterPro"/>
</dbReference>
<dbReference type="Gene3D" id="2.30.30.110">
    <property type="match status" value="1"/>
</dbReference>
<dbReference type="InterPro" id="IPR002712">
    <property type="entry name" value="CcdB"/>
</dbReference>
<dbReference type="InterPro" id="IPR011067">
    <property type="entry name" value="Plasmid_toxin/cell-grow_inhib"/>
</dbReference>
<dbReference type="NCBIfam" id="NF010262">
    <property type="entry name" value="PRK13708.1"/>
    <property type="match status" value="1"/>
</dbReference>
<dbReference type="Pfam" id="PF01845">
    <property type="entry name" value="CcdB"/>
    <property type="match status" value="1"/>
</dbReference>
<dbReference type="SUPFAM" id="SSF50118">
    <property type="entry name" value="Cell growth inhibitor/plasmid maintenance toxic component"/>
    <property type="match status" value="1"/>
</dbReference>
<keyword id="KW-0614">Plasmid</keyword>
<keyword id="KW-1185">Reference proteome</keyword>
<keyword id="KW-0678">Repressor</keyword>
<keyword id="KW-1277">Toxin-antitoxin system</keyword>
<keyword id="KW-0804">Transcription</keyword>
<keyword id="KW-0805">Transcription regulation</keyword>
<evidence type="ECO:0000250" key="1"/>
<evidence type="ECO:0000305" key="2"/>
<comment type="function">
    <text evidence="1">Toxic component of a type II toxin-antitoxin (TA) system, functioning in plasmid maintainence. Responsible for the post-segregational killing (PSK) of plasmid-free cells, also referred to as a plasmid addiction system. Half-life of over 2 hours. Interferes with the activity of DNA gyrase, inducing it to form a covalent GyrA-DNA complex that cannot be resolved, thus promoting breakage of plasmid and chromosomal DNA. Toxicity is inhibited by labile antitoxin CcdA, which blocks the activity of CcdB; CcdA also removes bound CcdB protein from the CcdB-GyrA complex by forming a CcdA-CcdB complex, a process termed rejuvenation. Functions as a transcriptional corepressor for the ccdAB operon, repression also requires CcdA (By similarity).</text>
</comment>
<comment type="subunit">
    <text evidence="1">Homodimer. Forms a complex with GyrA, probably a tetramer GyrA(2)CcdB(2), in which GyrA is inactive. Forms a complex with toxin CcdB; the CcdA-CcdB(2) trimer is sufficient for rejuvenation, whereas maximal operon repression occurs with CcdA(2)CcdB(2) (By similarity).</text>
</comment>
<comment type="similarity">
    <text evidence="2">Belongs to the CcdB toxin family.</text>
</comment>
<proteinExistence type="inferred from homology"/>